<gene>
    <name type="primary">nrfF</name>
    <name type="ordered locus">Z5674</name>
    <name type="ordered locus">ECs5057</name>
</gene>
<organism>
    <name type="scientific">Escherichia coli O157:H7</name>
    <dbReference type="NCBI Taxonomy" id="83334"/>
    <lineage>
        <taxon>Bacteria</taxon>
        <taxon>Pseudomonadati</taxon>
        <taxon>Pseudomonadota</taxon>
        <taxon>Gammaproteobacteria</taxon>
        <taxon>Enterobacterales</taxon>
        <taxon>Enterobacteriaceae</taxon>
        <taxon>Escherichia</taxon>
    </lineage>
</organism>
<comment type="function">
    <text>Not required for the biosynthesis of any of the c-type cytochromes. Possible subunit of a heme lyase.</text>
</comment>
<comment type="subcellular location">
    <subcellularLocation>
        <location evidence="2">Periplasm</location>
    </subcellularLocation>
</comment>
<comment type="similarity">
    <text evidence="2">Belongs to the CcmH/CycL/Ccl2/NrfF family.</text>
</comment>
<name>NRFF_ECO57</name>
<feature type="signal peptide" evidence="1">
    <location>
        <begin position="1"/>
        <end position="27"/>
    </location>
</feature>
<feature type="chain" id="PRO_0000006615" description="Formate-dependent nitrite reductase complex subunit NrfF">
    <location>
        <begin position="28"/>
        <end position="127"/>
    </location>
</feature>
<feature type="binding site" description="covalent" evidence="1">
    <location>
        <position position="44"/>
    </location>
    <ligand>
        <name>heme</name>
        <dbReference type="ChEBI" id="CHEBI:30413"/>
    </ligand>
</feature>
<feature type="binding site" description="covalent" evidence="1">
    <location>
        <position position="47"/>
    </location>
    <ligand>
        <name>heme</name>
        <dbReference type="ChEBI" id="CHEBI:30413"/>
    </ligand>
</feature>
<keyword id="KW-0349">Heme</keyword>
<keyword id="KW-0408">Iron</keyword>
<keyword id="KW-0479">Metal-binding</keyword>
<keyword id="KW-0574">Periplasm</keyword>
<keyword id="KW-1185">Reference proteome</keyword>
<keyword id="KW-0732">Signal</keyword>
<sequence length="127" mass="14564">MYKGLLTLLLLFTCFARAQVVDTWQFANPQQQQQALNIASQLRCPQCQNQNLLESNAPVAVSMRHQVYSMVAEGKSEVEIIGWMTERYGDFVRYNPPLTGQTLVLWALPVVLLLLMALILWRVRAKR</sequence>
<dbReference type="EMBL" id="AE005174">
    <property type="protein sequence ID" value="AAG59273.1"/>
    <property type="molecule type" value="Genomic_DNA"/>
</dbReference>
<dbReference type="EMBL" id="BA000007">
    <property type="protein sequence ID" value="BAB38480.1"/>
    <property type="molecule type" value="Genomic_DNA"/>
</dbReference>
<dbReference type="PIR" id="A98261">
    <property type="entry name" value="A98261"/>
</dbReference>
<dbReference type="PIR" id="E86101">
    <property type="entry name" value="E86101"/>
</dbReference>
<dbReference type="RefSeq" id="NP_313084.1">
    <property type="nucleotide sequence ID" value="NC_002695.1"/>
</dbReference>
<dbReference type="RefSeq" id="WP_000276458.1">
    <property type="nucleotide sequence ID" value="NZ_VOAI01000008.1"/>
</dbReference>
<dbReference type="SMR" id="Q8X5S5"/>
<dbReference type="STRING" id="155864.Z5674"/>
<dbReference type="GeneID" id="914285"/>
<dbReference type="KEGG" id="ece:Z5674"/>
<dbReference type="KEGG" id="ecs:ECs_5057"/>
<dbReference type="PATRIC" id="fig|386585.9.peg.5283"/>
<dbReference type="eggNOG" id="COG3088">
    <property type="taxonomic scope" value="Bacteria"/>
</dbReference>
<dbReference type="HOGENOM" id="CLU_107187_0_2_6"/>
<dbReference type="OMA" id="CSGESIY"/>
<dbReference type="Proteomes" id="UP000000558">
    <property type="component" value="Chromosome"/>
</dbReference>
<dbReference type="Proteomes" id="UP000002519">
    <property type="component" value="Chromosome"/>
</dbReference>
<dbReference type="GO" id="GO:0042597">
    <property type="term" value="C:periplasmic space"/>
    <property type="evidence" value="ECO:0007669"/>
    <property type="project" value="UniProtKB-SubCell"/>
</dbReference>
<dbReference type="GO" id="GO:0005886">
    <property type="term" value="C:plasma membrane"/>
    <property type="evidence" value="ECO:0007669"/>
    <property type="project" value="TreeGrafter"/>
</dbReference>
<dbReference type="GO" id="GO:0046872">
    <property type="term" value="F:metal ion binding"/>
    <property type="evidence" value="ECO:0007669"/>
    <property type="project" value="UniProtKB-KW"/>
</dbReference>
<dbReference type="CDD" id="cd16378">
    <property type="entry name" value="CcmH_N"/>
    <property type="match status" value="1"/>
</dbReference>
<dbReference type="FunFam" id="1.10.8.640:FF:000001">
    <property type="entry name" value="Cytochrome c-type biogenesis protein"/>
    <property type="match status" value="1"/>
</dbReference>
<dbReference type="Gene3D" id="1.10.8.640">
    <property type="entry name" value="Cytochrome C biogenesis protein"/>
    <property type="match status" value="1"/>
</dbReference>
<dbReference type="InterPro" id="IPR051263">
    <property type="entry name" value="C-type_cytochrome_biogenesis"/>
</dbReference>
<dbReference type="InterPro" id="IPR005616">
    <property type="entry name" value="CcmH/CycL/Ccl2/NrfF_N"/>
</dbReference>
<dbReference type="InterPro" id="IPR038297">
    <property type="entry name" value="CcmH/CycL/NrfF/Ccl2_sf"/>
</dbReference>
<dbReference type="InterPro" id="IPR017565">
    <property type="entry name" value="For-dep_Cytc_NO2Rdtase_NrfF"/>
</dbReference>
<dbReference type="NCBIfam" id="TIGR03147">
    <property type="entry name" value="cyt_nit_nrfF"/>
    <property type="match status" value="1"/>
</dbReference>
<dbReference type="PANTHER" id="PTHR47870">
    <property type="entry name" value="CYTOCHROME C-TYPE BIOGENESIS PROTEIN CCMH"/>
    <property type="match status" value="1"/>
</dbReference>
<dbReference type="PANTHER" id="PTHR47870:SF2">
    <property type="entry name" value="FORMATE-DEPENDENT NITRITE REDUCTASE COMPLEX SUBUNIT NRFF"/>
    <property type="match status" value="1"/>
</dbReference>
<dbReference type="Pfam" id="PF03918">
    <property type="entry name" value="CcmH"/>
    <property type="match status" value="1"/>
</dbReference>
<proteinExistence type="inferred from homology"/>
<accession>Q8X5S5</accession>
<protein>
    <recommendedName>
        <fullName>Formate-dependent nitrite reductase complex subunit NrfF</fullName>
    </recommendedName>
</protein>
<reference key="1">
    <citation type="journal article" date="2001" name="Nature">
        <title>Genome sequence of enterohaemorrhagic Escherichia coli O157:H7.</title>
        <authorList>
            <person name="Perna N.T."/>
            <person name="Plunkett G. III"/>
            <person name="Burland V."/>
            <person name="Mau B."/>
            <person name="Glasner J.D."/>
            <person name="Rose D.J."/>
            <person name="Mayhew G.F."/>
            <person name="Evans P.S."/>
            <person name="Gregor J."/>
            <person name="Kirkpatrick H.A."/>
            <person name="Posfai G."/>
            <person name="Hackett J."/>
            <person name="Klink S."/>
            <person name="Boutin A."/>
            <person name="Shao Y."/>
            <person name="Miller L."/>
            <person name="Grotbeck E.J."/>
            <person name="Davis N.W."/>
            <person name="Lim A."/>
            <person name="Dimalanta E.T."/>
            <person name="Potamousis K."/>
            <person name="Apodaca J."/>
            <person name="Anantharaman T.S."/>
            <person name="Lin J."/>
            <person name="Yen G."/>
            <person name="Schwartz D.C."/>
            <person name="Welch R.A."/>
            <person name="Blattner F.R."/>
        </authorList>
    </citation>
    <scope>NUCLEOTIDE SEQUENCE [LARGE SCALE GENOMIC DNA]</scope>
    <source>
        <strain>O157:H7 / EDL933 / ATCC 700927 / EHEC</strain>
    </source>
</reference>
<reference key="2">
    <citation type="journal article" date="2001" name="DNA Res.">
        <title>Complete genome sequence of enterohemorrhagic Escherichia coli O157:H7 and genomic comparison with a laboratory strain K-12.</title>
        <authorList>
            <person name="Hayashi T."/>
            <person name="Makino K."/>
            <person name="Ohnishi M."/>
            <person name="Kurokawa K."/>
            <person name="Ishii K."/>
            <person name="Yokoyama K."/>
            <person name="Han C.-G."/>
            <person name="Ohtsubo E."/>
            <person name="Nakayama K."/>
            <person name="Murata T."/>
            <person name="Tanaka M."/>
            <person name="Tobe T."/>
            <person name="Iida T."/>
            <person name="Takami H."/>
            <person name="Honda T."/>
            <person name="Sasakawa C."/>
            <person name="Ogasawara N."/>
            <person name="Yasunaga T."/>
            <person name="Kuhara S."/>
            <person name="Shiba T."/>
            <person name="Hattori M."/>
            <person name="Shinagawa H."/>
        </authorList>
    </citation>
    <scope>NUCLEOTIDE SEQUENCE [LARGE SCALE GENOMIC DNA]</scope>
    <source>
        <strain>O157:H7 / Sakai / RIMD 0509952 / EHEC</strain>
    </source>
</reference>
<evidence type="ECO:0000255" key="1"/>
<evidence type="ECO:0000305" key="2"/>